<feature type="chain" id="PRO_0000351931" description="Protein-L-isoaspartate O-methyltransferase">
    <location>
        <begin position="1"/>
        <end position="213"/>
    </location>
</feature>
<feature type="active site" evidence="1">
    <location>
        <position position="60"/>
    </location>
</feature>
<sequence>MSEAERKMQFLYALRSKGVTDKRVLSAMENIDRGPFIRGIFAERAYEDMPLPIACGQTISQPSVVGLMTQALKISPRDKVLEVGTGSGYQAAILSRLARRVYTLDRHSRLVREARTLFEEMNLTNITAITADGSYGLADQAPFDRILVTAAAEDPPSTLMEQLKVGGIMVIPVGQSDAVQHLIVVHKTEDGLEYDELRQVRFVPLLEGLGKDG</sequence>
<reference key="1">
    <citation type="journal article" date="2007" name="J. Bacteriol.">
        <title>The complete genome sequence of Roseobacter denitrificans reveals a mixotrophic rather than photosynthetic metabolism.</title>
        <authorList>
            <person name="Swingley W.D."/>
            <person name="Sadekar S."/>
            <person name="Mastrian S.D."/>
            <person name="Matthies H.J."/>
            <person name="Hao J."/>
            <person name="Ramos H."/>
            <person name="Acharya C.R."/>
            <person name="Conrad A.L."/>
            <person name="Taylor H.L."/>
            <person name="Dejesa L.C."/>
            <person name="Shah M.K."/>
            <person name="O'Huallachain M.E."/>
            <person name="Lince M.T."/>
            <person name="Blankenship R.E."/>
            <person name="Beatty J.T."/>
            <person name="Touchman J.W."/>
        </authorList>
    </citation>
    <scope>NUCLEOTIDE SEQUENCE [LARGE SCALE GENOMIC DNA]</scope>
    <source>
        <strain>ATCC 33942 / OCh 114</strain>
    </source>
</reference>
<name>PIMT_ROSDO</name>
<keyword id="KW-0963">Cytoplasm</keyword>
<keyword id="KW-0489">Methyltransferase</keyword>
<keyword id="KW-1185">Reference proteome</keyword>
<keyword id="KW-0949">S-adenosyl-L-methionine</keyword>
<keyword id="KW-0808">Transferase</keyword>
<protein>
    <recommendedName>
        <fullName evidence="1">Protein-L-isoaspartate O-methyltransferase</fullName>
        <ecNumber evidence="1">2.1.1.77</ecNumber>
    </recommendedName>
    <alternativeName>
        <fullName evidence="1">L-isoaspartyl protein carboxyl methyltransferase</fullName>
    </alternativeName>
    <alternativeName>
        <fullName evidence="1">Protein L-isoaspartyl methyltransferase</fullName>
    </alternativeName>
    <alternativeName>
        <fullName evidence="1">Protein-beta-aspartate methyltransferase</fullName>
        <shortName evidence="1">PIMT</shortName>
    </alternativeName>
</protein>
<comment type="function">
    <text evidence="1">Catalyzes the methyl esterification of L-isoaspartyl residues in peptides and proteins that result from spontaneous decomposition of normal L-aspartyl and L-asparaginyl residues. It plays a role in the repair and/or degradation of damaged proteins.</text>
</comment>
<comment type="catalytic activity">
    <reaction evidence="1">
        <text>[protein]-L-isoaspartate + S-adenosyl-L-methionine = [protein]-L-isoaspartate alpha-methyl ester + S-adenosyl-L-homocysteine</text>
        <dbReference type="Rhea" id="RHEA:12705"/>
        <dbReference type="Rhea" id="RHEA-COMP:12143"/>
        <dbReference type="Rhea" id="RHEA-COMP:12144"/>
        <dbReference type="ChEBI" id="CHEBI:57856"/>
        <dbReference type="ChEBI" id="CHEBI:59789"/>
        <dbReference type="ChEBI" id="CHEBI:90596"/>
        <dbReference type="ChEBI" id="CHEBI:90598"/>
        <dbReference type="EC" id="2.1.1.77"/>
    </reaction>
</comment>
<comment type="subcellular location">
    <subcellularLocation>
        <location evidence="1">Cytoplasm</location>
    </subcellularLocation>
</comment>
<comment type="similarity">
    <text evidence="1">Belongs to the methyltransferase superfamily. L-isoaspartyl/D-aspartyl protein methyltransferase family.</text>
</comment>
<gene>
    <name evidence="1" type="primary">pcm</name>
    <name type="ordered locus">RD1_3250</name>
</gene>
<organism>
    <name type="scientific">Roseobacter denitrificans (strain ATCC 33942 / OCh 114)</name>
    <name type="common">Erythrobacter sp. (strain OCh 114)</name>
    <name type="synonym">Roseobacter denitrificans</name>
    <dbReference type="NCBI Taxonomy" id="375451"/>
    <lineage>
        <taxon>Bacteria</taxon>
        <taxon>Pseudomonadati</taxon>
        <taxon>Pseudomonadota</taxon>
        <taxon>Alphaproteobacteria</taxon>
        <taxon>Rhodobacterales</taxon>
        <taxon>Roseobacteraceae</taxon>
        <taxon>Roseobacter</taxon>
    </lineage>
</organism>
<dbReference type="EC" id="2.1.1.77" evidence="1"/>
<dbReference type="EMBL" id="CP000362">
    <property type="protein sequence ID" value="ABG32751.1"/>
    <property type="molecule type" value="Genomic_DNA"/>
</dbReference>
<dbReference type="SMR" id="Q163U2"/>
<dbReference type="STRING" id="375451.RD1_3250"/>
<dbReference type="KEGG" id="rde:RD1_3250"/>
<dbReference type="eggNOG" id="COG2518">
    <property type="taxonomic scope" value="Bacteria"/>
</dbReference>
<dbReference type="HOGENOM" id="CLU_055432_2_0_5"/>
<dbReference type="Proteomes" id="UP000007029">
    <property type="component" value="Chromosome"/>
</dbReference>
<dbReference type="GO" id="GO:0005737">
    <property type="term" value="C:cytoplasm"/>
    <property type="evidence" value="ECO:0007669"/>
    <property type="project" value="UniProtKB-SubCell"/>
</dbReference>
<dbReference type="GO" id="GO:0004719">
    <property type="term" value="F:protein-L-isoaspartate (D-aspartate) O-methyltransferase activity"/>
    <property type="evidence" value="ECO:0007669"/>
    <property type="project" value="UniProtKB-UniRule"/>
</dbReference>
<dbReference type="GO" id="GO:0032259">
    <property type="term" value="P:methylation"/>
    <property type="evidence" value="ECO:0007669"/>
    <property type="project" value="UniProtKB-KW"/>
</dbReference>
<dbReference type="GO" id="GO:0036211">
    <property type="term" value="P:protein modification process"/>
    <property type="evidence" value="ECO:0007669"/>
    <property type="project" value="UniProtKB-UniRule"/>
</dbReference>
<dbReference type="GO" id="GO:0030091">
    <property type="term" value="P:protein repair"/>
    <property type="evidence" value="ECO:0007669"/>
    <property type="project" value="UniProtKB-UniRule"/>
</dbReference>
<dbReference type="CDD" id="cd02440">
    <property type="entry name" value="AdoMet_MTases"/>
    <property type="match status" value="1"/>
</dbReference>
<dbReference type="FunFam" id="3.40.50.150:FF:000010">
    <property type="entry name" value="Protein-L-isoaspartate O-methyltransferase"/>
    <property type="match status" value="1"/>
</dbReference>
<dbReference type="Gene3D" id="3.40.50.150">
    <property type="entry name" value="Vaccinia Virus protein VP39"/>
    <property type="match status" value="1"/>
</dbReference>
<dbReference type="HAMAP" id="MF_00090">
    <property type="entry name" value="PIMT"/>
    <property type="match status" value="1"/>
</dbReference>
<dbReference type="InterPro" id="IPR000682">
    <property type="entry name" value="PCMT"/>
</dbReference>
<dbReference type="InterPro" id="IPR029063">
    <property type="entry name" value="SAM-dependent_MTases_sf"/>
</dbReference>
<dbReference type="NCBIfam" id="TIGR00080">
    <property type="entry name" value="pimt"/>
    <property type="match status" value="1"/>
</dbReference>
<dbReference type="NCBIfam" id="NF001453">
    <property type="entry name" value="PRK00312.1"/>
    <property type="match status" value="1"/>
</dbReference>
<dbReference type="PANTHER" id="PTHR11579">
    <property type="entry name" value="PROTEIN-L-ISOASPARTATE O-METHYLTRANSFERASE"/>
    <property type="match status" value="1"/>
</dbReference>
<dbReference type="PANTHER" id="PTHR11579:SF0">
    <property type="entry name" value="PROTEIN-L-ISOASPARTATE(D-ASPARTATE) O-METHYLTRANSFERASE"/>
    <property type="match status" value="1"/>
</dbReference>
<dbReference type="Pfam" id="PF01135">
    <property type="entry name" value="PCMT"/>
    <property type="match status" value="1"/>
</dbReference>
<dbReference type="SUPFAM" id="SSF53335">
    <property type="entry name" value="S-adenosyl-L-methionine-dependent methyltransferases"/>
    <property type="match status" value="1"/>
</dbReference>
<dbReference type="PROSITE" id="PS01279">
    <property type="entry name" value="PCMT"/>
    <property type="match status" value="1"/>
</dbReference>
<proteinExistence type="inferred from homology"/>
<accession>Q163U2</accession>
<evidence type="ECO:0000255" key="1">
    <source>
        <dbReference type="HAMAP-Rule" id="MF_00090"/>
    </source>
</evidence>